<gene>
    <name evidence="1" type="primary">tsf</name>
    <name type="ordered locus">AAur_1504</name>
</gene>
<proteinExistence type="inferred from homology"/>
<protein>
    <recommendedName>
        <fullName evidence="1">Elongation factor Ts</fullName>
        <shortName evidence="1">EF-Ts</shortName>
    </recommendedName>
</protein>
<feature type="chain" id="PRO_1000006051" description="Elongation factor Ts">
    <location>
        <begin position="1"/>
        <end position="278"/>
    </location>
</feature>
<feature type="region of interest" description="Involved in Mg(2+) ion dislocation from EF-Tu" evidence="1">
    <location>
        <begin position="80"/>
        <end position="83"/>
    </location>
</feature>
<name>EFTS_PAEAT</name>
<reference key="1">
    <citation type="journal article" date="2006" name="PLoS Genet.">
        <title>Secrets of soil survival revealed by the genome sequence of Arthrobacter aurescens TC1.</title>
        <authorList>
            <person name="Mongodin E.F."/>
            <person name="Shapir N."/>
            <person name="Daugherty S.C."/>
            <person name="DeBoy R.T."/>
            <person name="Emerson J.B."/>
            <person name="Shvartzbeyn A."/>
            <person name="Radune D."/>
            <person name="Vamathevan J."/>
            <person name="Riggs F."/>
            <person name="Grinberg V."/>
            <person name="Khouri H.M."/>
            <person name="Wackett L.P."/>
            <person name="Nelson K.E."/>
            <person name="Sadowsky M.J."/>
        </authorList>
    </citation>
    <scope>NUCLEOTIDE SEQUENCE [LARGE SCALE GENOMIC DNA]</scope>
    <source>
        <strain>TC1</strain>
    </source>
</reference>
<dbReference type="EMBL" id="CP000474">
    <property type="protein sequence ID" value="ABM09037.1"/>
    <property type="molecule type" value="Genomic_DNA"/>
</dbReference>
<dbReference type="RefSeq" id="WP_011774217.1">
    <property type="nucleotide sequence ID" value="NC_008711.1"/>
</dbReference>
<dbReference type="SMR" id="A1R4W0"/>
<dbReference type="STRING" id="290340.AAur_1504"/>
<dbReference type="KEGG" id="aau:AAur_1504"/>
<dbReference type="eggNOG" id="COG0264">
    <property type="taxonomic scope" value="Bacteria"/>
</dbReference>
<dbReference type="HOGENOM" id="CLU_047155_0_0_11"/>
<dbReference type="OrthoDB" id="9808348at2"/>
<dbReference type="Proteomes" id="UP000000637">
    <property type="component" value="Chromosome"/>
</dbReference>
<dbReference type="GO" id="GO:0005737">
    <property type="term" value="C:cytoplasm"/>
    <property type="evidence" value="ECO:0007669"/>
    <property type="project" value="UniProtKB-SubCell"/>
</dbReference>
<dbReference type="GO" id="GO:0003746">
    <property type="term" value="F:translation elongation factor activity"/>
    <property type="evidence" value="ECO:0007669"/>
    <property type="project" value="UniProtKB-UniRule"/>
</dbReference>
<dbReference type="CDD" id="cd14275">
    <property type="entry name" value="UBA_EF-Ts"/>
    <property type="match status" value="1"/>
</dbReference>
<dbReference type="FunFam" id="1.10.286.20:FF:000001">
    <property type="entry name" value="Elongation factor Ts"/>
    <property type="match status" value="1"/>
</dbReference>
<dbReference type="FunFam" id="1.10.8.10:FF:000001">
    <property type="entry name" value="Elongation factor Ts"/>
    <property type="match status" value="1"/>
</dbReference>
<dbReference type="Gene3D" id="1.10.286.20">
    <property type="match status" value="1"/>
</dbReference>
<dbReference type="Gene3D" id="1.10.8.10">
    <property type="entry name" value="DNA helicase RuvA subunit, C-terminal domain"/>
    <property type="match status" value="1"/>
</dbReference>
<dbReference type="Gene3D" id="3.30.479.20">
    <property type="entry name" value="Elongation factor Ts, dimerisation domain"/>
    <property type="match status" value="2"/>
</dbReference>
<dbReference type="HAMAP" id="MF_00050">
    <property type="entry name" value="EF_Ts"/>
    <property type="match status" value="1"/>
</dbReference>
<dbReference type="InterPro" id="IPR036402">
    <property type="entry name" value="EF-Ts_dimer_sf"/>
</dbReference>
<dbReference type="InterPro" id="IPR001816">
    <property type="entry name" value="Transl_elong_EFTs/EF1B"/>
</dbReference>
<dbReference type="InterPro" id="IPR014039">
    <property type="entry name" value="Transl_elong_EFTs/EF1B_dimer"/>
</dbReference>
<dbReference type="InterPro" id="IPR018101">
    <property type="entry name" value="Transl_elong_Ts_CS"/>
</dbReference>
<dbReference type="InterPro" id="IPR009060">
    <property type="entry name" value="UBA-like_sf"/>
</dbReference>
<dbReference type="NCBIfam" id="TIGR00116">
    <property type="entry name" value="tsf"/>
    <property type="match status" value="1"/>
</dbReference>
<dbReference type="PANTHER" id="PTHR11741">
    <property type="entry name" value="ELONGATION FACTOR TS"/>
    <property type="match status" value="1"/>
</dbReference>
<dbReference type="PANTHER" id="PTHR11741:SF0">
    <property type="entry name" value="ELONGATION FACTOR TS, MITOCHONDRIAL"/>
    <property type="match status" value="1"/>
</dbReference>
<dbReference type="Pfam" id="PF00889">
    <property type="entry name" value="EF_TS"/>
    <property type="match status" value="1"/>
</dbReference>
<dbReference type="SUPFAM" id="SSF54713">
    <property type="entry name" value="Elongation factor Ts (EF-Ts), dimerisation domain"/>
    <property type="match status" value="1"/>
</dbReference>
<dbReference type="SUPFAM" id="SSF46934">
    <property type="entry name" value="UBA-like"/>
    <property type="match status" value="1"/>
</dbReference>
<dbReference type="PROSITE" id="PS01126">
    <property type="entry name" value="EF_TS_1"/>
    <property type="match status" value="1"/>
</dbReference>
<dbReference type="PROSITE" id="PS01127">
    <property type="entry name" value="EF_TS_2"/>
    <property type="match status" value="1"/>
</dbReference>
<sequence>MANYTAADIKALRERTGAGMMDVKKALDEANGDAEKAIEIIRIKGLKGATKREGRSTAEGLVAAKVNGGVGVMIEVNCETDFVAKADKFIQLADKVLNVAVESGAADLETLLATEVDGKPLSEVVVEEGAVLGEKVVVRRISRVEGTTVDAYLHKTSKDLPAQVGVLFAVDGEGEAAATAAHDIAVHVAAMAPNYLTREDVPAELVESERRIAEETAKAEGKPEAALSKIVEGRVTGFYKGEVLVDQAFAKDSKKTVAQVLEEAGVKATAVTRFRVGN</sequence>
<accession>A1R4W0</accession>
<keyword id="KW-0963">Cytoplasm</keyword>
<keyword id="KW-0251">Elongation factor</keyword>
<keyword id="KW-0648">Protein biosynthesis</keyword>
<comment type="function">
    <text evidence="1">Associates with the EF-Tu.GDP complex and induces the exchange of GDP to GTP. It remains bound to the aminoacyl-tRNA.EF-Tu.GTP complex up to the GTP hydrolysis stage on the ribosome.</text>
</comment>
<comment type="subcellular location">
    <subcellularLocation>
        <location evidence="1">Cytoplasm</location>
    </subcellularLocation>
</comment>
<comment type="similarity">
    <text evidence="1">Belongs to the EF-Ts family.</text>
</comment>
<evidence type="ECO:0000255" key="1">
    <source>
        <dbReference type="HAMAP-Rule" id="MF_00050"/>
    </source>
</evidence>
<organism>
    <name type="scientific">Paenarthrobacter aurescens (strain TC1)</name>
    <dbReference type="NCBI Taxonomy" id="290340"/>
    <lineage>
        <taxon>Bacteria</taxon>
        <taxon>Bacillati</taxon>
        <taxon>Actinomycetota</taxon>
        <taxon>Actinomycetes</taxon>
        <taxon>Micrococcales</taxon>
        <taxon>Micrococcaceae</taxon>
        <taxon>Paenarthrobacter</taxon>
    </lineage>
</organism>